<keyword id="KW-0966">Cell projection</keyword>
<keyword id="KW-0967">Endosome</keyword>
<keyword id="KW-0342">GTP-binding</keyword>
<keyword id="KW-0378">Hydrolase</keyword>
<keyword id="KW-0449">Lipoprotein</keyword>
<keyword id="KW-0460">Magnesium</keyword>
<keyword id="KW-0472">Membrane</keyword>
<keyword id="KW-0479">Metal-binding</keyword>
<keyword id="KW-0547">Nucleotide-binding</keyword>
<keyword id="KW-0597">Phosphoprotein</keyword>
<keyword id="KW-0636">Prenylation</keyword>
<keyword id="KW-0653">Protein transport</keyword>
<keyword id="KW-1185">Reference proteome</keyword>
<keyword id="KW-0813">Transport</keyword>
<accession>P35292</accession>
<accession>Q921D2</accession>
<accession>Q9D723</accession>
<reference key="1">
    <citation type="journal article" date="1993" name="J. Cell Biol.">
        <title>Rab17, a novel small GTPase, is specific for epithelial cells and is induced during cell polarization.</title>
        <authorList>
            <person name="Luetcke A."/>
            <person name="Jansson S."/>
            <person name="Parton R.G."/>
            <person name="Chavrier P."/>
            <person name="Valencia A."/>
            <person name="Huber L.A."/>
            <person name="Lehtonen E."/>
            <person name="Zerial M."/>
        </authorList>
    </citation>
    <scope>NUCLEOTIDE SEQUENCE [MRNA]</scope>
    <scope>SUBCELLULAR LOCATION</scope>
    <scope>TISSUE SPECIFICITY</scope>
    <source>
        <tissue>Kidney</tissue>
    </source>
</reference>
<reference key="2">
    <citation type="journal article" date="2005" name="Science">
        <title>The transcriptional landscape of the mammalian genome.</title>
        <authorList>
            <person name="Carninci P."/>
            <person name="Kasukawa T."/>
            <person name="Katayama S."/>
            <person name="Gough J."/>
            <person name="Frith M.C."/>
            <person name="Maeda N."/>
            <person name="Oyama R."/>
            <person name="Ravasi T."/>
            <person name="Lenhard B."/>
            <person name="Wells C."/>
            <person name="Kodzius R."/>
            <person name="Shimokawa K."/>
            <person name="Bajic V.B."/>
            <person name="Brenner S.E."/>
            <person name="Batalov S."/>
            <person name="Forrest A.R."/>
            <person name="Zavolan M."/>
            <person name="Davis M.J."/>
            <person name="Wilming L.G."/>
            <person name="Aidinis V."/>
            <person name="Allen J.E."/>
            <person name="Ambesi-Impiombato A."/>
            <person name="Apweiler R."/>
            <person name="Aturaliya R.N."/>
            <person name="Bailey T.L."/>
            <person name="Bansal M."/>
            <person name="Baxter L."/>
            <person name="Beisel K.W."/>
            <person name="Bersano T."/>
            <person name="Bono H."/>
            <person name="Chalk A.M."/>
            <person name="Chiu K.P."/>
            <person name="Choudhary V."/>
            <person name="Christoffels A."/>
            <person name="Clutterbuck D.R."/>
            <person name="Crowe M.L."/>
            <person name="Dalla E."/>
            <person name="Dalrymple B.P."/>
            <person name="de Bono B."/>
            <person name="Della Gatta G."/>
            <person name="di Bernardo D."/>
            <person name="Down T."/>
            <person name="Engstrom P."/>
            <person name="Fagiolini M."/>
            <person name="Faulkner G."/>
            <person name="Fletcher C.F."/>
            <person name="Fukushima T."/>
            <person name="Furuno M."/>
            <person name="Futaki S."/>
            <person name="Gariboldi M."/>
            <person name="Georgii-Hemming P."/>
            <person name="Gingeras T.R."/>
            <person name="Gojobori T."/>
            <person name="Green R.E."/>
            <person name="Gustincich S."/>
            <person name="Harbers M."/>
            <person name="Hayashi Y."/>
            <person name="Hensch T.K."/>
            <person name="Hirokawa N."/>
            <person name="Hill D."/>
            <person name="Huminiecki L."/>
            <person name="Iacono M."/>
            <person name="Ikeo K."/>
            <person name="Iwama A."/>
            <person name="Ishikawa T."/>
            <person name="Jakt M."/>
            <person name="Kanapin A."/>
            <person name="Katoh M."/>
            <person name="Kawasawa Y."/>
            <person name="Kelso J."/>
            <person name="Kitamura H."/>
            <person name="Kitano H."/>
            <person name="Kollias G."/>
            <person name="Krishnan S.P."/>
            <person name="Kruger A."/>
            <person name="Kummerfeld S.K."/>
            <person name="Kurochkin I.V."/>
            <person name="Lareau L.F."/>
            <person name="Lazarevic D."/>
            <person name="Lipovich L."/>
            <person name="Liu J."/>
            <person name="Liuni S."/>
            <person name="McWilliam S."/>
            <person name="Madan Babu M."/>
            <person name="Madera M."/>
            <person name="Marchionni L."/>
            <person name="Matsuda H."/>
            <person name="Matsuzawa S."/>
            <person name="Miki H."/>
            <person name="Mignone F."/>
            <person name="Miyake S."/>
            <person name="Morris K."/>
            <person name="Mottagui-Tabar S."/>
            <person name="Mulder N."/>
            <person name="Nakano N."/>
            <person name="Nakauchi H."/>
            <person name="Ng P."/>
            <person name="Nilsson R."/>
            <person name="Nishiguchi S."/>
            <person name="Nishikawa S."/>
            <person name="Nori F."/>
            <person name="Ohara O."/>
            <person name="Okazaki Y."/>
            <person name="Orlando V."/>
            <person name="Pang K.C."/>
            <person name="Pavan W.J."/>
            <person name="Pavesi G."/>
            <person name="Pesole G."/>
            <person name="Petrovsky N."/>
            <person name="Piazza S."/>
            <person name="Reed J."/>
            <person name="Reid J.F."/>
            <person name="Ring B.Z."/>
            <person name="Ringwald M."/>
            <person name="Rost B."/>
            <person name="Ruan Y."/>
            <person name="Salzberg S.L."/>
            <person name="Sandelin A."/>
            <person name="Schneider C."/>
            <person name="Schoenbach C."/>
            <person name="Sekiguchi K."/>
            <person name="Semple C.A."/>
            <person name="Seno S."/>
            <person name="Sessa L."/>
            <person name="Sheng Y."/>
            <person name="Shibata Y."/>
            <person name="Shimada H."/>
            <person name="Shimada K."/>
            <person name="Silva D."/>
            <person name="Sinclair B."/>
            <person name="Sperling S."/>
            <person name="Stupka E."/>
            <person name="Sugiura K."/>
            <person name="Sultana R."/>
            <person name="Takenaka Y."/>
            <person name="Taki K."/>
            <person name="Tammoja K."/>
            <person name="Tan S.L."/>
            <person name="Tang S."/>
            <person name="Taylor M.S."/>
            <person name="Tegner J."/>
            <person name="Teichmann S.A."/>
            <person name="Ueda H.R."/>
            <person name="van Nimwegen E."/>
            <person name="Verardo R."/>
            <person name="Wei C.L."/>
            <person name="Yagi K."/>
            <person name="Yamanishi H."/>
            <person name="Zabarovsky E."/>
            <person name="Zhu S."/>
            <person name="Zimmer A."/>
            <person name="Hide W."/>
            <person name="Bult C."/>
            <person name="Grimmond S.M."/>
            <person name="Teasdale R.D."/>
            <person name="Liu E.T."/>
            <person name="Brusic V."/>
            <person name="Quackenbush J."/>
            <person name="Wahlestedt C."/>
            <person name="Mattick J.S."/>
            <person name="Hume D.A."/>
            <person name="Kai C."/>
            <person name="Sasaki D."/>
            <person name="Tomaru Y."/>
            <person name="Fukuda S."/>
            <person name="Kanamori-Katayama M."/>
            <person name="Suzuki M."/>
            <person name="Aoki J."/>
            <person name="Arakawa T."/>
            <person name="Iida J."/>
            <person name="Imamura K."/>
            <person name="Itoh M."/>
            <person name="Kato T."/>
            <person name="Kawaji H."/>
            <person name="Kawagashira N."/>
            <person name="Kawashima T."/>
            <person name="Kojima M."/>
            <person name="Kondo S."/>
            <person name="Konno H."/>
            <person name="Nakano K."/>
            <person name="Ninomiya N."/>
            <person name="Nishio T."/>
            <person name="Okada M."/>
            <person name="Plessy C."/>
            <person name="Shibata K."/>
            <person name="Shiraki T."/>
            <person name="Suzuki S."/>
            <person name="Tagami M."/>
            <person name="Waki K."/>
            <person name="Watahiki A."/>
            <person name="Okamura-Oho Y."/>
            <person name="Suzuki H."/>
            <person name="Kawai J."/>
            <person name="Hayashizaki Y."/>
        </authorList>
    </citation>
    <scope>NUCLEOTIDE SEQUENCE [LARGE SCALE MRNA]</scope>
    <source>
        <strain>C57BL/6J</strain>
        <tissue>Kidney</tissue>
        <tissue>Tongue</tissue>
    </source>
</reference>
<reference key="3">
    <citation type="journal article" date="2004" name="Genome Res.">
        <title>The status, quality, and expansion of the NIH full-length cDNA project: the Mammalian Gene Collection (MGC).</title>
        <authorList>
            <consortium name="The MGC Project Team"/>
        </authorList>
    </citation>
    <scope>NUCLEOTIDE SEQUENCE [LARGE SCALE MRNA]</scope>
    <source>
        <tissue>Olfactory epithelium</tissue>
    </source>
</reference>
<reference key="4">
    <citation type="journal article" date="1992" name="Gene">
        <title>The complexity of the Rab and Rho GTP-binding protein subfamilies revealed by a PCR cloning approach.</title>
        <authorList>
            <person name="Chavrier P."/>
            <person name="Simons K."/>
            <person name="Zerial M."/>
        </authorList>
    </citation>
    <scope>NUCLEOTIDE SEQUENCE [MRNA] OF 1-78</scope>
    <source>
        <tissue>Kidney</tissue>
    </source>
</reference>
<reference key="5">
    <citation type="journal article" date="1998" name="J. Biol. Chem.">
        <title>Rab17 localizes to recycling endosomes and regulates receptor-mediated transcytosis in epithelial cells.</title>
        <authorList>
            <person name="Hunziker W."/>
            <person name="Peters P.J."/>
        </authorList>
    </citation>
    <scope>FUNCTION IN TRANSCYTOSIS</scope>
    <scope>SUBCELLULAR LOCATION</scope>
    <scope>TOPOLOGY</scope>
    <scope>ISOPRENYLATION AT CYS-211 AND CYS-212</scope>
    <scope>MUTAGENESIS OF 211-CYS-CYS-212</scope>
</reference>
<reference key="6">
    <citation type="journal article" date="1998" name="J. Cell Biol.">
        <title>Rab17 regulates membrane trafficking through apical recycling endosomes in polarized epithelial cells.</title>
        <authorList>
            <person name="Zacchi P."/>
            <person name="Stenmark H."/>
            <person name="Parton R.G."/>
            <person name="Orioli D."/>
            <person name="Lim F."/>
            <person name="Giner A."/>
            <person name="Mellman I."/>
            <person name="Zerial M."/>
            <person name="Murphy C."/>
        </authorList>
    </citation>
    <scope>FUNCTION</scope>
    <scope>SUBCELLULAR LOCATION</scope>
</reference>
<reference key="7">
    <citation type="journal article" date="2010" name="Cell">
        <title>A tissue-specific atlas of mouse protein phosphorylation and expression.</title>
        <authorList>
            <person name="Huttlin E.L."/>
            <person name="Jedrychowski M.P."/>
            <person name="Elias J.E."/>
            <person name="Goswami T."/>
            <person name="Rad R."/>
            <person name="Beausoleil S.A."/>
            <person name="Villen J."/>
            <person name="Haas W."/>
            <person name="Sowa M.E."/>
            <person name="Gygi S.P."/>
        </authorList>
    </citation>
    <scope>PHOSPHORYLATION [LARGE SCALE ANALYSIS] AT SER-29</scope>
    <scope>IDENTIFICATION BY MASS SPECTROMETRY [LARGE SCALE ANALYSIS]</scope>
    <source>
        <tissue>Kidney</tissue>
        <tissue>Liver</tissue>
        <tissue>Pancreas</tissue>
    </source>
</reference>
<reference key="8">
    <citation type="journal article" date="2011" name="Traffic">
        <title>The recycling endosome protein Rab17 regulates melanocytic filopodia formation and melanosome trafficking.</title>
        <authorList>
            <person name="Beaumont K.A."/>
            <person name="Hamilton N.A."/>
            <person name="Moores M.T."/>
            <person name="Brown D.L."/>
            <person name="Ohbayashi N."/>
            <person name="Cairncross O."/>
            <person name="Cook A.L."/>
            <person name="Smith A.G."/>
            <person name="Misaki R."/>
            <person name="Fukuda M."/>
            <person name="Taguchi T."/>
            <person name="Sturm R.A."/>
            <person name="Stow J.L."/>
        </authorList>
    </citation>
    <scope>FUNCTION IN MELANOSOME TRANSPORT</scope>
    <scope>SUBCELLULAR LOCATION</scope>
</reference>
<reference key="9">
    <citation type="journal article" date="2012" name="J. Biol. Chem.">
        <title>Small GTPase Rab17 regulates dendritic morphogenesis and postsynaptic development of hippocampal neurons.</title>
        <authorList>
            <person name="Mori Y."/>
            <person name="Matsui T."/>
            <person name="Furutani Y."/>
            <person name="Yoshihara Y."/>
            <person name="Fukuda M."/>
        </authorList>
    </citation>
    <scope>FUNCTION IN DENDRITOGENESIS</scope>
    <scope>SUBCELLULAR LOCATION</scope>
    <scope>TISSUE SPECIFICITY</scope>
    <scope>DEVELOPMENTAL STAGE</scope>
    <scope>MUTAGENESIS OF GLN-77</scope>
</reference>
<feature type="chain" id="PRO_0000121192" description="Ras-related protein Rab-17">
    <location>
        <begin position="1"/>
        <end position="214"/>
    </location>
</feature>
<feature type="region of interest" description="Disordered" evidence="5">
    <location>
        <begin position="183"/>
        <end position="204"/>
    </location>
</feature>
<feature type="short sequence motif" description="Switch 1" evidence="2">
    <location>
        <begin position="43"/>
        <end position="54"/>
    </location>
</feature>
<feature type="short sequence motif" description="Switch 2" evidence="2">
    <location>
        <begin position="75"/>
        <end position="91"/>
    </location>
</feature>
<feature type="binding site" evidence="1">
    <location>
        <position position="31"/>
    </location>
    <ligand>
        <name>GTP</name>
        <dbReference type="ChEBI" id="CHEBI:37565"/>
    </ligand>
</feature>
<feature type="binding site" evidence="1">
    <location>
        <position position="32"/>
    </location>
    <ligand>
        <name>GTP</name>
        <dbReference type="ChEBI" id="CHEBI:37565"/>
    </ligand>
</feature>
<feature type="binding site" evidence="1">
    <location>
        <position position="33"/>
    </location>
    <ligand>
        <name>GTP</name>
        <dbReference type="ChEBI" id="CHEBI:37565"/>
    </ligand>
</feature>
<feature type="binding site" evidence="1">
    <location>
        <position position="33"/>
    </location>
    <ligand>
        <name>Mg(2+)</name>
        <dbReference type="ChEBI" id="CHEBI:18420"/>
    </ligand>
</feature>
<feature type="binding site" evidence="1">
    <location>
        <position position="50"/>
    </location>
    <ligand>
        <name>GTP</name>
        <dbReference type="ChEBI" id="CHEBI:37565"/>
    </ligand>
</feature>
<feature type="binding site" evidence="1">
    <location>
        <position position="50"/>
    </location>
    <ligand>
        <name>Mg(2+)</name>
        <dbReference type="ChEBI" id="CHEBI:18420"/>
    </ligand>
</feature>
<feature type="binding site" evidence="3">
    <location>
        <position position="73"/>
    </location>
    <ligand>
        <name>Mg(2+)</name>
        <dbReference type="ChEBI" id="CHEBI:18420"/>
    </ligand>
</feature>
<feature type="binding site" evidence="1">
    <location>
        <position position="76"/>
    </location>
    <ligand>
        <name>GTP</name>
        <dbReference type="ChEBI" id="CHEBI:37565"/>
    </ligand>
</feature>
<feature type="binding site" evidence="1">
    <location>
        <position position="132"/>
    </location>
    <ligand>
        <name>GTP</name>
        <dbReference type="ChEBI" id="CHEBI:37565"/>
    </ligand>
</feature>
<feature type="binding site" evidence="1">
    <location>
        <position position="133"/>
    </location>
    <ligand>
        <name>GTP</name>
        <dbReference type="ChEBI" id="CHEBI:37565"/>
    </ligand>
</feature>
<feature type="binding site" evidence="1">
    <location>
        <position position="135"/>
    </location>
    <ligand>
        <name>GTP</name>
        <dbReference type="ChEBI" id="CHEBI:37565"/>
    </ligand>
</feature>
<feature type="binding site" evidence="1">
    <location>
        <position position="163"/>
    </location>
    <ligand>
        <name>GTP</name>
        <dbReference type="ChEBI" id="CHEBI:37565"/>
    </ligand>
</feature>
<feature type="modified residue" description="Phosphoserine" evidence="14">
    <location>
        <position position="29"/>
    </location>
</feature>
<feature type="lipid moiety-binding region" description="S-geranylgeranyl cysteine" evidence="10">
    <location>
        <position position="211"/>
    </location>
</feature>
<feature type="lipid moiety-binding region" description="S-geranylgeranyl cysteine" evidence="10">
    <location>
        <position position="212"/>
    </location>
</feature>
<feature type="mutagenesis site" description="Probable constitutively active mutant unable to hydrolyze GTP; increases dendrite number and length." evidence="7">
    <original>Q</original>
    <variation>L</variation>
    <location>
        <position position="77"/>
    </location>
</feature>
<feature type="mutagenesis site" description="Loss of association with membranes and redistribution to the cytosol." evidence="10">
    <original>CC</original>
    <variation>AA</variation>
    <location>
        <begin position="211"/>
        <end position="212"/>
    </location>
</feature>
<feature type="sequence conflict" description="In Ref. 3; BAC35842." evidence="11" ref="3">
    <original>V</original>
    <variation>L</variation>
    <location>
        <position position="19"/>
    </location>
</feature>
<feature type="sequence conflict" description="In Ref. 2; BAB26452." evidence="11" ref="2">
    <original>T</original>
    <variation>K</variation>
    <location>
        <position position="57"/>
    </location>
</feature>
<organism>
    <name type="scientific">Mus musculus</name>
    <name type="common">Mouse</name>
    <dbReference type="NCBI Taxonomy" id="10090"/>
    <lineage>
        <taxon>Eukaryota</taxon>
        <taxon>Metazoa</taxon>
        <taxon>Chordata</taxon>
        <taxon>Craniata</taxon>
        <taxon>Vertebrata</taxon>
        <taxon>Euteleostomi</taxon>
        <taxon>Mammalia</taxon>
        <taxon>Eutheria</taxon>
        <taxon>Euarchontoglires</taxon>
        <taxon>Glires</taxon>
        <taxon>Rodentia</taxon>
        <taxon>Myomorpha</taxon>
        <taxon>Muroidea</taxon>
        <taxon>Muridae</taxon>
        <taxon>Murinae</taxon>
        <taxon>Mus</taxon>
        <taxon>Mus</taxon>
    </lineage>
</organism>
<protein>
    <recommendedName>
        <fullName>Ras-related protein Rab-17</fullName>
        <ecNumber evidence="1">3.6.5.2</ecNumber>
    </recommendedName>
</protein>
<gene>
    <name evidence="13" type="primary">Rab17</name>
</gene>
<comment type="function">
    <text evidence="1 4 6 7 9 10">The small GTPases Rab are key regulators of intracellular membrane trafficking, from the formation of transport vesicles to their fusion with membranes. Rabs cycle between an inactive GDP-bound form and an active GTP-bound form that is able to recruit to membranes different set of downstream effectors directly responsible for vesicle formation, movement, tethering and fusion (By similarity). RAB17 is involved in transcytosis, the directed movement of endocytosed material through the cell and its exocytosis from the plasma membrane at the opposite side. Mainly observed in epithelial cells, transcytosis mediates, for instance, the transcellular transport of immunoglobulins from the basolateral surface to the apical surface (PubMed:9624171). Most probably controls membrane trafficking through apical recycling endosomes in a post-endocytic step of transcytosis (PubMed:9490718). Required for melanosome transport and release from melanocytes, it also regulates dendrite and dendritic spine development (PubMed:21291502, PubMed:22291024). May also play a role in cell migration (By similarity).</text>
</comment>
<comment type="catalytic activity">
    <reaction evidence="1">
        <text>GTP + H2O = GDP + phosphate + H(+)</text>
        <dbReference type="Rhea" id="RHEA:19669"/>
        <dbReference type="ChEBI" id="CHEBI:15377"/>
        <dbReference type="ChEBI" id="CHEBI:15378"/>
        <dbReference type="ChEBI" id="CHEBI:37565"/>
        <dbReference type="ChEBI" id="CHEBI:43474"/>
        <dbReference type="ChEBI" id="CHEBI:58189"/>
        <dbReference type="EC" id="3.6.5.2"/>
    </reaction>
    <physiologicalReaction direction="left-to-right" evidence="1">
        <dbReference type="Rhea" id="RHEA:19670"/>
    </physiologicalReaction>
</comment>
<comment type="cofactor">
    <cofactor evidence="1">
        <name>Mg(2+)</name>
        <dbReference type="ChEBI" id="CHEBI:18420"/>
    </cofactor>
</comment>
<comment type="activity regulation">
    <text evidence="11">Regulated by guanine nucleotide exchange factors (GEFs) which promote the exchange of bound GDP for free GTP. Regulated by GTPase activating proteins (GAPs) which increase the GTP hydrolysis activity. Inhibited by GDP dissociation inhibitors (GDIs).</text>
</comment>
<comment type="subcellular location">
    <subcellularLocation>
        <location evidence="6 7 9 10">Recycling endosome membrane</location>
        <topology evidence="12">Lipid-anchor</topology>
        <orientation evidence="12">Cytoplasmic side</orientation>
    </subcellularLocation>
    <subcellularLocation>
        <location evidence="6">Melanosome</location>
    </subcellularLocation>
    <subcellularLocation>
        <location evidence="7">Cell projection</location>
        <location evidence="7">Dendrite</location>
    </subcellularLocation>
    <text evidence="6 7 8">According to a report the protein is localized at the basolateral and apical plasma membrane of kidney epithelial cells (PubMed:8486736). It was later shown to localize to the apical recycling endosome in epithelial cells (PubMed:21291502). In neurons, localizes to the cell body and dendritic shaft and spine (PubMed:22291024).</text>
</comment>
<comment type="tissue specificity">
    <text evidence="7 8">Expressed in kidney, liver, and intestine mainly by epithelial cells. Expressed in hippocampus (at protein level).</text>
</comment>
<comment type="developmental stage">
    <text evidence="7">Expression starts at 5 dpc and gradually increases from P5 to adulthood (at protein level).</text>
</comment>
<comment type="domain">
    <text evidence="2">Switch 1, switch 2 and the interswitch regions are characteristic of Rab GTPases and mediate the interactions with Rab downstream effectors. The switch regions undergo conformational changes upon nucleotide binding which drive interaction with specific sets of effector proteins, with most effectors only binding to GTP-bound Rab.</text>
</comment>
<comment type="similarity">
    <text evidence="11">Belongs to the small GTPase superfamily. Rab family.</text>
</comment>
<sequence>MAQAAGLPQASTASGQPYVSKLVLLGSSSVGKTSLALRYMKQDFSNVLPTVGCAFFTKVLDLGSSSLKLEIWDTAGQEKYQSVCHLYFRGANAALLVYDITRKDSFHKAQQWLEDLEKEFQPGEVVVMLVGNKTDLGEEREVTFQEGKEFAESKSLLFMETSAKLNYQVSEIFNTVAQELLQRAGDTGSSRPQEGEAVALNQEPPIRQRQCCAR</sequence>
<evidence type="ECO:0000250" key="1">
    <source>
        <dbReference type="UniProtKB" id="P20338"/>
    </source>
</evidence>
<evidence type="ECO:0000250" key="2">
    <source>
        <dbReference type="UniProtKB" id="P20339"/>
    </source>
</evidence>
<evidence type="ECO:0000250" key="3">
    <source>
        <dbReference type="UniProtKB" id="P61018"/>
    </source>
</evidence>
<evidence type="ECO:0000250" key="4">
    <source>
        <dbReference type="UniProtKB" id="Q9H0T7"/>
    </source>
</evidence>
<evidence type="ECO:0000256" key="5">
    <source>
        <dbReference type="SAM" id="MobiDB-lite"/>
    </source>
</evidence>
<evidence type="ECO:0000269" key="6">
    <source>
    </source>
</evidence>
<evidence type="ECO:0000269" key="7">
    <source>
    </source>
</evidence>
<evidence type="ECO:0000269" key="8">
    <source>
    </source>
</evidence>
<evidence type="ECO:0000269" key="9">
    <source>
    </source>
</evidence>
<evidence type="ECO:0000269" key="10">
    <source>
    </source>
</evidence>
<evidence type="ECO:0000305" key="11"/>
<evidence type="ECO:0000305" key="12">
    <source>
    </source>
</evidence>
<evidence type="ECO:0000312" key="13">
    <source>
        <dbReference type="MGI" id="MGI:104640"/>
    </source>
</evidence>
<evidence type="ECO:0007744" key="14">
    <source>
    </source>
</evidence>
<dbReference type="EC" id="3.6.5.2" evidence="1"/>
<dbReference type="EMBL" id="X70804">
    <property type="protein sequence ID" value="CAA50071.1"/>
    <property type="molecule type" value="mRNA"/>
</dbReference>
<dbReference type="EMBL" id="AK009707">
    <property type="protein sequence ID" value="BAB26452.1"/>
    <property type="molecule type" value="mRNA"/>
</dbReference>
<dbReference type="EMBL" id="AK075591">
    <property type="protein sequence ID" value="BAC35842.1"/>
    <property type="molecule type" value="mRNA"/>
</dbReference>
<dbReference type="EMBL" id="BC013170">
    <property type="protein sequence ID" value="AAH13170.1"/>
    <property type="molecule type" value="mRNA"/>
</dbReference>
<dbReference type="EMBL" id="BC051071">
    <property type="protein sequence ID" value="AAH51071.1"/>
    <property type="molecule type" value="mRNA"/>
</dbReference>
<dbReference type="EMBL" id="M79307">
    <property type="protein sequence ID" value="AAK14831.1"/>
    <property type="molecule type" value="mRNA"/>
</dbReference>
<dbReference type="CCDS" id="CCDS15156.1"/>
<dbReference type="PIR" id="A46434">
    <property type="entry name" value="A46434"/>
</dbReference>
<dbReference type="RefSeq" id="NP_001153197.2">
    <property type="nucleotide sequence ID" value="NM_001159725.2"/>
</dbReference>
<dbReference type="RefSeq" id="NP_033024.1">
    <property type="nucleotide sequence ID" value="NM_008998.4"/>
</dbReference>
<dbReference type="RefSeq" id="XP_006529326.1">
    <property type="nucleotide sequence ID" value="XM_006529263.3"/>
</dbReference>
<dbReference type="SMR" id="P35292"/>
<dbReference type="BioGRID" id="202535">
    <property type="interactions" value="2"/>
</dbReference>
<dbReference type="FunCoup" id="P35292">
    <property type="interactions" value="144"/>
</dbReference>
<dbReference type="IntAct" id="P35292">
    <property type="interactions" value="27"/>
</dbReference>
<dbReference type="MINT" id="P35292"/>
<dbReference type="STRING" id="10090.ENSMUSP00000027529"/>
<dbReference type="GlyGen" id="P35292">
    <property type="glycosylation" value="1 site"/>
</dbReference>
<dbReference type="iPTMnet" id="P35292"/>
<dbReference type="PhosphoSitePlus" id="P35292"/>
<dbReference type="jPOST" id="P35292"/>
<dbReference type="PaxDb" id="10090-ENSMUSP00000027529"/>
<dbReference type="PeptideAtlas" id="P35292"/>
<dbReference type="ProteomicsDB" id="300288"/>
<dbReference type="ABCD" id="P35292">
    <property type="antibodies" value="20 sequenced antibodies"/>
</dbReference>
<dbReference type="Antibodypedia" id="34483">
    <property type="antibodies" value="278 antibodies from 30 providers"/>
</dbReference>
<dbReference type="DNASU" id="19329"/>
<dbReference type="Ensembl" id="ENSMUST00000027529.12">
    <property type="protein sequence ID" value="ENSMUSP00000027529.6"/>
    <property type="gene ID" value="ENSMUSG00000026304.14"/>
</dbReference>
<dbReference type="Ensembl" id="ENSMUST00000131428.8">
    <property type="protein sequence ID" value="ENSMUSP00000122178.2"/>
    <property type="gene ID" value="ENSMUSG00000026304.14"/>
</dbReference>
<dbReference type="GeneID" id="19329"/>
<dbReference type="KEGG" id="mmu:19329"/>
<dbReference type="UCSC" id="uc007bzn.2">
    <property type="organism name" value="mouse"/>
</dbReference>
<dbReference type="AGR" id="MGI:104640"/>
<dbReference type="CTD" id="64284"/>
<dbReference type="MGI" id="MGI:104640">
    <property type="gene designation" value="Rab17"/>
</dbReference>
<dbReference type="VEuPathDB" id="HostDB:ENSMUSG00000026304"/>
<dbReference type="eggNOG" id="KOG0092">
    <property type="taxonomic scope" value="Eukaryota"/>
</dbReference>
<dbReference type="GeneTree" id="ENSGT00940000161839"/>
<dbReference type="InParanoid" id="P35292"/>
<dbReference type="OMA" id="SCCKVGP"/>
<dbReference type="OrthoDB" id="63533at2759"/>
<dbReference type="PhylomeDB" id="P35292"/>
<dbReference type="TreeFam" id="TF300199"/>
<dbReference type="Reactome" id="R-MMU-8873719">
    <property type="pathway name" value="RAB geranylgeranylation"/>
</dbReference>
<dbReference type="BioGRID-ORCS" id="19329">
    <property type="hits" value="0 hits in 77 CRISPR screens"/>
</dbReference>
<dbReference type="ChiTaRS" id="Rab17">
    <property type="organism name" value="mouse"/>
</dbReference>
<dbReference type="PRO" id="PR:P35292"/>
<dbReference type="Proteomes" id="UP000000589">
    <property type="component" value="Chromosome 1"/>
</dbReference>
<dbReference type="RNAct" id="P35292">
    <property type="molecule type" value="protein"/>
</dbReference>
<dbReference type="Bgee" id="ENSMUSG00000026304">
    <property type="expression patterns" value="Expressed in submandibular gland and 122 other cell types or tissues"/>
</dbReference>
<dbReference type="ExpressionAtlas" id="P35292">
    <property type="expression patterns" value="baseline and differential"/>
</dbReference>
<dbReference type="GO" id="GO:0016324">
    <property type="term" value="C:apical plasma membrane"/>
    <property type="evidence" value="ECO:0000314"/>
    <property type="project" value="UniProtKB"/>
</dbReference>
<dbReference type="GO" id="GO:0016323">
    <property type="term" value="C:basolateral plasma membrane"/>
    <property type="evidence" value="ECO:0000314"/>
    <property type="project" value="UniProtKB"/>
</dbReference>
<dbReference type="GO" id="GO:0030425">
    <property type="term" value="C:dendrite"/>
    <property type="evidence" value="ECO:0000314"/>
    <property type="project" value="UniProtKB"/>
</dbReference>
<dbReference type="GO" id="GO:0032839">
    <property type="term" value="C:dendrite cytoplasm"/>
    <property type="evidence" value="ECO:0007669"/>
    <property type="project" value="GOC"/>
</dbReference>
<dbReference type="GO" id="GO:0030139">
    <property type="term" value="C:endocytic vesicle"/>
    <property type="evidence" value="ECO:0007669"/>
    <property type="project" value="Ensembl"/>
</dbReference>
<dbReference type="GO" id="GO:0098978">
    <property type="term" value="C:glutamatergic synapse"/>
    <property type="evidence" value="ECO:0000314"/>
    <property type="project" value="SynGO"/>
</dbReference>
<dbReference type="GO" id="GO:0042470">
    <property type="term" value="C:melanosome"/>
    <property type="evidence" value="ECO:0000314"/>
    <property type="project" value="UniProtKB"/>
</dbReference>
<dbReference type="GO" id="GO:0043025">
    <property type="term" value="C:neuronal cell body"/>
    <property type="evidence" value="ECO:0000314"/>
    <property type="project" value="UniProtKB"/>
</dbReference>
<dbReference type="GO" id="GO:0098794">
    <property type="term" value="C:postsynapse"/>
    <property type="evidence" value="ECO:0000314"/>
    <property type="project" value="SynGO"/>
</dbReference>
<dbReference type="GO" id="GO:0055037">
    <property type="term" value="C:recycling endosome"/>
    <property type="evidence" value="ECO:0000314"/>
    <property type="project" value="UniProtKB"/>
</dbReference>
<dbReference type="GO" id="GO:0055038">
    <property type="term" value="C:recycling endosome membrane"/>
    <property type="evidence" value="ECO:0000314"/>
    <property type="project" value="UniProtKB"/>
</dbReference>
<dbReference type="GO" id="GO:0019003">
    <property type="term" value="F:GDP binding"/>
    <property type="evidence" value="ECO:0000250"/>
    <property type="project" value="UniProtKB"/>
</dbReference>
<dbReference type="GO" id="GO:0005525">
    <property type="term" value="F:GTP binding"/>
    <property type="evidence" value="ECO:0007669"/>
    <property type="project" value="UniProtKB-KW"/>
</dbReference>
<dbReference type="GO" id="GO:0003924">
    <property type="term" value="F:GTPase activity"/>
    <property type="evidence" value="ECO:0007669"/>
    <property type="project" value="Ensembl"/>
</dbReference>
<dbReference type="GO" id="GO:0098937">
    <property type="term" value="P:anterograde dendritic transport"/>
    <property type="evidence" value="ECO:0000314"/>
    <property type="project" value="SynGO"/>
</dbReference>
<dbReference type="GO" id="GO:0060271">
    <property type="term" value="P:cilium assembly"/>
    <property type="evidence" value="ECO:0007669"/>
    <property type="project" value="Ensembl"/>
</dbReference>
<dbReference type="GO" id="GO:0032456">
    <property type="term" value="P:endocytic recycling"/>
    <property type="evidence" value="ECO:0000315"/>
    <property type="project" value="UniProtKB"/>
</dbReference>
<dbReference type="GO" id="GO:0032401">
    <property type="term" value="P:establishment of melanosome localization"/>
    <property type="evidence" value="ECO:0000315"/>
    <property type="project" value="UniProtKB"/>
</dbReference>
<dbReference type="GO" id="GO:0046847">
    <property type="term" value="P:filopodium assembly"/>
    <property type="evidence" value="ECO:0000315"/>
    <property type="project" value="UniProtKB"/>
</dbReference>
<dbReference type="GO" id="GO:0002415">
    <property type="term" value="P:immunoglobulin transcytosis in epithelial cells mediated by polymeric immunoglobulin receptor"/>
    <property type="evidence" value="ECO:0000315"/>
    <property type="project" value="UniProtKB"/>
</dbReference>
<dbReference type="GO" id="GO:0032402">
    <property type="term" value="P:melanosome transport"/>
    <property type="evidence" value="ECO:0000315"/>
    <property type="project" value="UniProtKB"/>
</dbReference>
<dbReference type="GO" id="GO:0015031">
    <property type="term" value="P:protein transport"/>
    <property type="evidence" value="ECO:0007669"/>
    <property type="project" value="UniProtKB-KW"/>
</dbReference>
<dbReference type="GO" id="GO:0050773">
    <property type="term" value="P:regulation of dendrite development"/>
    <property type="evidence" value="ECO:0000315"/>
    <property type="project" value="UniProtKB"/>
</dbReference>
<dbReference type="GO" id="GO:0051489">
    <property type="term" value="P:regulation of filopodium assembly"/>
    <property type="evidence" value="ECO:0000315"/>
    <property type="project" value="UniProtKB"/>
</dbReference>
<dbReference type="GO" id="GO:0051963">
    <property type="term" value="P:regulation of synapse assembly"/>
    <property type="evidence" value="ECO:0000315"/>
    <property type="project" value="UniProtKB"/>
</dbReference>
<dbReference type="GO" id="GO:0045056">
    <property type="term" value="P:transcytosis"/>
    <property type="evidence" value="ECO:0000315"/>
    <property type="project" value="UniProtKB"/>
</dbReference>
<dbReference type="CDD" id="cd01860">
    <property type="entry name" value="Rab5_related"/>
    <property type="match status" value="1"/>
</dbReference>
<dbReference type="FunFam" id="3.40.50.300:FF:001282">
    <property type="entry name" value="RAB17, member RAS oncogene family"/>
    <property type="match status" value="1"/>
</dbReference>
<dbReference type="Gene3D" id="3.40.50.300">
    <property type="entry name" value="P-loop containing nucleotide triphosphate hydrolases"/>
    <property type="match status" value="1"/>
</dbReference>
<dbReference type="InterPro" id="IPR027417">
    <property type="entry name" value="P-loop_NTPase"/>
</dbReference>
<dbReference type="InterPro" id="IPR050209">
    <property type="entry name" value="Rab_GTPases_membrane_traffic"/>
</dbReference>
<dbReference type="InterPro" id="IPR005225">
    <property type="entry name" value="Small_GTP-bd"/>
</dbReference>
<dbReference type="InterPro" id="IPR001806">
    <property type="entry name" value="Small_GTPase"/>
</dbReference>
<dbReference type="NCBIfam" id="TIGR00231">
    <property type="entry name" value="small_GTP"/>
    <property type="match status" value="1"/>
</dbReference>
<dbReference type="PANTHER" id="PTHR47979">
    <property type="entry name" value="DRAB11-RELATED"/>
    <property type="match status" value="1"/>
</dbReference>
<dbReference type="Pfam" id="PF00071">
    <property type="entry name" value="Ras"/>
    <property type="match status" value="1"/>
</dbReference>
<dbReference type="PRINTS" id="PR00449">
    <property type="entry name" value="RASTRNSFRMNG"/>
</dbReference>
<dbReference type="SMART" id="SM00175">
    <property type="entry name" value="RAB"/>
    <property type="match status" value="1"/>
</dbReference>
<dbReference type="SMART" id="SM00176">
    <property type="entry name" value="RAN"/>
    <property type="match status" value="1"/>
</dbReference>
<dbReference type="SMART" id="SM00173">
    <property type="entry name" value="RAS"/>
    <property type="match status" value="1"/>
</dbReference>
<dbReference type="SMART" id="SM00174">
    <property type="entry name" value="RHO"/>
    <property type="match status" value="1"/>
</dbReference>
<dbReference type="SUPFAM" id="SSF52540">
    <property type="entry name" value="P-loop containing nucleoside triphosphate hydrolases"/>
    <property type="match status" value="1"/>
</dbReference>
<dbReference type="PROSITE" id="PS51419">
    <property type="entry name" value="RAB"/>
    <property type="match status" value="1"/>
</dbReference>
<name>RAB17_MOUSE</name>
<proteinExistence type="evidence at protein level"/>